<proteinExistence type="inferred from homology"/>
<gene>
    <name evidence="1" type="primary">rpsM</name>
    <name type="ordered locus">Desal_1208</name>
</gene>
<keyword id="KW-1185">Reference proteome</keyword>
<keyword id="KW-0687">Ribonucleoprotein</keyword>
<keyword id="KW-0689">Ribosomal protein</keyword>
<keyword id="KW-0694">RNA-binding</keyword>
<keyword id="KW-0699">rRNA-binding</keyword>
<keyword id="KW-0820">tRNA-binding</keyword>
<accession>C6C1A8</accession>
<dbReference type="EMBL" id="CP001649">
    <property type="protein sequence ID" value="ACS79271.1"/>
    <property type="molecule type" value="Genomic_DNA"/>
</dbReference>
<dbReference type="RefSeq" id="WP_015851089.1">
    <property type="nucleotide sequence ID" value="NC_012881.1"/>
</dbReference>
<dbReference type="SMR" id="C6C1A8"/>
<dbReference type="STRING" id="526222.Desal_1208"/>
<dbReference type="KEGG" id="dsa:Desal_1208"/>
<dbReference type="eggNOG" id="COG0099">
    <property type="taxonomic scope" value="Bacteria"/>
</dbReference>
<dbReference type="HOGENOM" id="CLU_103849_1_2_7"/>
<dbReference type="OrthoDB" id="9803610at2"/>
<dbReference type="Proteomes" id="UP000002601">
    <property type="component" value="Chromosome"/>
</dbReference>
<dbReference type="GO" id="GO:0005829">
    <property type="term" value="C:cytosol"/>
    <property type="evidence" value="ECO:0007669"/>
    <property type="project" value="TreeGrafter"/>
</dbReference>
<dbReference type="GO" id="GO:0015935">
    <property type="term" value="C:small ribosomal subunit"/>
    <property type="evidence" value="ECO:0007669"/>
    <property type="project" value="TreeGrafter"/>
</dbReference>
<dbReference type="GO" id="GO:0019843">
    <property type="term" value="F:rRNA binding"/>
    <property type="evidence" value="ECO:0007669"/>
    <property type="project" value="UniProtKB-UniRule"/>
</dbReference>
<dbReference type="GO" id="GO:0003735">
    <property type="term" value="F:structural constituent of ribosome"/>
    <property type="evidence" value="ECO:0007669"/>
    <property type="project" value="InterPro"/>
</dbReference>
<dbReference type="GO" id="GO:0000049">
    <property type="term" value="F:tRNA binding"/>
    <property type="evidence" value="ECO:0007669"/>
    <property type="project" value="UniProtKB-UniRule"/>
</dbReference>
<dbReference type="GO" id="GO:0006412">
    <property type="term" value="P:translation"/>
    <property type="evidence" value="ECO:0007669"/>
    <property type="project" value="UniProtKB-UniRule"/>
</dbReference>
<dbReference type="FunFam" id="1.10.8.50:FF:000001">
    <property type="entry name" value="30S ribosomal protein S13"/>
    <property type="match status" value="1"/>
</dbReference>
<dbReference type="FunFam" id="4.10.910.10:FF:000001">
    <property type="entry name" value="30S ribosomal protein S13"/>
    <property type="match status" value="1"/>
</dbReference>
<dbReference type="Gene3D" id="1.10.8.50">
    <property type="match status" value="1"/>
</dbReference>
<dbReference type="Gene3D" id="4.10.910.10">
    <property type="entry name" value="30s ribosomal protein s13, domain 2"/>
    <property type="match status" value="1"/>
</dbReference>
<dbReference type="HAMAP" id="MF_01315">
    <property type="entry name" value="Ribosomal_uS13"/>
    <property type="match status" value="1"/>
</dbReference>
<dbReference type="InterPro" id="IPR027437">
    <property type="entry name" value="Rbsml_uS13_C"/>
</dbReference>
<dbReference type="InterPro" id="IPR001892">
    <property type="entry name" value="Ribosomal_uS13"/>
</dbReference>
<dbReference type="InterPro" id="IPR010979">
    <property type="entry name" value="Ribosomal_uS13-like_H2TH"/>
</dbReference>
<dbReference type="InterPro" id="IPR019980">
    <property type="entry name" value="Ribosomal_uS13_bac-type"/>
</dbReference>
<dbReference type="InterPro" id="IPR018269">
    <property type="entry name" value="Ribosomal_uS13_CS"/>
</dbReference>
<dbReference type="NCBIfam" id="TIGR03631">
    <property type="entry name" value="uS13_bact"/>
    <property type="match status" value="1"/>
</dbReference>
<dbReference type="PANTHER" id="PTHR10871">
    <property type="entry name" value="30S RIBOSOMAL PROTEIN S13/40S RIBOSOMAL PROTEIN S18"/>
    <property type="match status" value="1"/>
</dbReference>
<dbReference type="PANTHER" id="PTHR10871:SF1">
    <property type="entry name" value="SMALL RIBOSOMAL SUBUNIT PROTEIN US13M"/>
    <property type="match status" value="1"/>
</dbReference>
<dbReference type="Pfam" id="PF00416">
    <property type="entry name" value="Ribosomal_S13"/>
    <property type="match status" value="1"/>
</dbReference>
<dbReference type="PIRSF" id="PIRSF002134">
    <property type="entry name" value="Ribosomal_S13"/>
    <property type="match status" value="1"/>
</dbReference>
<dbReference type="SUPFAM" id="SSF46946">
    <property type="entry name" value="S13-like H2TH domain"/>
    <property type="match status" value="1"/>
</dbReference>
<dbReference type="PROSITE" id="PS00646">
    <property type="entry name" value="RIBOSOMAL_S13_1"/>
    <property type="match status" value="1"/>
</dbReference>
<dbReference type="PROSITE" id="PS50159">
    <property type="entry name" value="RIBOSOMAL_S13_2"/>
    <property type="match status" value="1"/>
</dbReference>
<reference key="1">
    <citation type="submission" date="2009-06" db="EMBL/GenBank/DDBJ databases">
        <title>Complete sequence of Desulfovibrio salexigens DSM 2638.</title>
        <authorList>
            <consortium name="US DOE Joint Genome Institute"/>
            <person name="Lucas S."/>
            <person name="Copeland A."/>
            <person name="Lapidus A."/>
            <person name="Glavina del Rio T."/>
            <person name="Tice H."/>
            <person name="Bruce D."/>
            <person name="Goodwin L."/>
            <person name="Pitluck S."/>
            <person name="Munk A.C."/>
            <person name="Brettin T."/>
            <person name="Detter J.C."/>
            <person name="Han C."/>
            <person name="Tapia R."/>
            <person name="Larimer F."/>
            <person name="Land M."/>
            <person name="Hauser L."/>
            <person name="Kyrpides N."/>
            <person name="Anderson I."/>
            <person name="Wall J.D."/>
            <person name="Arkin A.P."/>
            <person name="Dehal P."/>
            <person name="Chivian D."/>
            <person name="Giles B."/>
            <person name="Hazen T.C."/>
        </authorList>
    </citation>
    <scope>NUCLEOTIDE SEQUENCE [LARGE SCALE GENOMIC DNA]</scope>
    <source>
        <strain>ATCC 14822 / DSM 2638 / NCIMB 8403 / VKM B-1763</strain>
    </source>
</reference>
<feature type="chain" id="PRO_1000214388" description="Small ribosomal subunit protein uS13">
    <location>
        <begin position="1"/>
        <end position="123"/>
    </location>
</feature>
<feature type="region of interest" description="Disordered" evidence="2">
    <location>
        <begin position="95"/>
        <end position="123"/>
    </location>
</feature>
<feature type="compositionally biased region" description="Basic residues" evidence="2">
    <location>
        <begin position="107"/>
        <end position="123"/>
    </location>
</feature>
<organism>
    <name type="scientific">Maridesulfovibrio salexigens (strain ATCC 14822 / DSM 2638 / NCIMB 8403 / VKM B-1763)</name>
    <name type="common">Desulfovibrio salexigens</name>
    <dbReference type="NCBI Taxonomy" id="526222"/>
    <lineage>
        <taxon>Bacteria</taxon>
        <taxon>Pseudomonadati</taxon>
        <taxon>Thermodesulfobacteriota</taxon>
        <taxon>Desulfovibrionia</taxon>
        <taxon>Desulfovibrionales</taxon>
        <taxon>Desulfovibrionaceae</taxon>
        <taxon>Maridesulfovibrio</taxon>
    </lineage>
</organism>
<evidence type="ECO:0000255" key="1">
    <source>
        <dbReference type="HAMAP-Rule" id="MF_01315"/>
    </source>
</evidence>
<evidence type="ECO:0000256" key="2">
    <source>
        <dbReference type="SAM" id="MobiDB-lite"/>
    </source>
</evidence>
<evidence type="ECO:0000305" key="3"/>
<comment type="function">
    <text evidence="1">Located at the top of the head of the 30S subunit, it contacts several helices of the 16S rRNA. In the 70S ribosome it contacts the 23S rRNA (bridge B1a) and protein L5 of the 50S subunit (bridge B1b), connecting the 2 subunits; these bridges are implicated in subunit movement. Contacts the tRNAs in the A and P-sites.</text>
</comment>
<comment type="subunit">
    <text evidence="1">Part of the 30S ribosomal subunit. Forms a loose heterodimer with protein S19. Forms two bridges to the 50S subunit in the 70S ribosome.</text>
</comment>
<comment type="similarity">
    <text evidence="1">Belongs to the universal ribosomal protein uS13 family.</text>
</comment>
<name>RS13_MARSD</name>
<protein>
    <recommendedName>
        <fullName evidence="1">Small ribosomal subunit protein uS13</fullName>
    </recommendedName>
    <alternativeName>
        <fullName evidence="3">30S ribosomal protein S13</fullName>
    </alternativeName>
</protein>
<sequence>MARIAGVDLPKNKRLDIALTYIYGVGRTTALKILDTVGIDWTLKTDDLSGEQVNTIRKELEDNYKVEGDLRRDQIADIKRLMDIGCYRGLRHRRGLPVRGQSSKTNARTRKGPRRSVMSRKKK</sequence>